<accession>A6NEQ2</accession>
<accession>B2RWP1</accession>
<name>F181B_HUMAN</name>
<gene>
    <name type="primary">FAM181B</name>
</gene>
<organism>
    <name type="scientific">Homo sapiens</name>
    <name type="common">Human</name>
    <dbReference type="NCBI Taxonomy" id="9606"/>
    <lineage>
        <taxon>Eukaryota</taxon>
        <taxon>Metazoa</taxon>
        <taxon>Chordata</taxon>
        <taxon>Craniata</taxon>
        <taxon>Vertebrata</taxon>
        <taxon>Euteleostomi</taxon>
        <taxon>Mammalia</taxon>
        <taxon>Eutheria</taxon>
        <taxon>Euarchontoglires</taxon>
        <taxon>Primates</taxon>
        <taxon>Haplorrhini</taxon>
        <taxon>Catarrhini</taxon>
        <taxon>Hominidae</taxon>
        <taxon>Homo</taxon>
    </lineage>
</organism>
<keyword id="KW-0002">3D-structure</keyword>
<keyword id="KW-1267">Proteomics identification</keyword>
<keyword id="KW-1185">Reference proteome</keyword>
<reference key="1">
    <citation type="journal article" date="2006" name="Nature">
        <title>Human chromosome 11 DNA sequence and analysis including novel gene identification.</title>
        <authorList>
            <person name="Taylor T.D."/>
            <person name="Noguchi H."/>
            <person name="Totoki Y."/>
            <person name="Toyoda A."/>
            <person name="Kuroki Y."/>
            <person name="Dewar K."/>
            <person name="Lloyd C."/>
            <person name="Itoh T."/>
            <person name="Takeda T."/>
            <person name="Kim D.-W."/>
            <person name="She X."/>
            <person name="Barlow K.F."/>
            <person name="Bloom T."/>
            <person name="Bruford E."/>
            <person name="Chang J.L."/>
            <person name="Cuomo C.A."/>
            <person name="Eichler E."/>
            <person name="FitzGerald M.G."/>
            <person name="Jaffe D.B."/>
            <person name="LaButti K."/>
            <person name="Nicol R."/>
            <person name="Park H.-S."/>
            <person name="Seaman C."/>
            <person name="Sougnez C."/>
            <person name="Yang X."/>
            <person name="Zimmer A.R."/>
            <person name="Zody M.C."/>
            <person name="Birren B.W."/>
            <person name="Nusbaum C."/>
            <person name="Fujiyama A."/>
            <person name="Hattori M."/>
            <person name="Rogers J."/>
            <person name="Lander E.S."/>
            <person name="Sakaki Y."/>
        </authorList>
    </citation>
    <scope>NUCLEOTIDE SEQUENCE [LARGE SCALE GENOMIC DNA]</scope>
</reference>
<reference key="2">
    <citation type="submission" date="2005-07" db="EMBL/GenBank/DDBJ databases">
        <authorList>
            <person name="Mural R.J."/>
            <person name="Istrail S."/>
            <person name="Sutton G.G."/>
            <person name="Florea L."/>
            <person name="Halpern A.L."/>
            <person name="Mobarry C.M."/>
            <person name="Lippert R."/>
            <person name="Walenz B."/>
            <person name="Shatkay H."/>
            <person name="Dew I."/>
            <person name="Miller J.R."/>
            <person name="Flanigan M.J."/>
            <person name="Edwards N.J."/>
            <person name="Bolanos R."/>
            <person name="Fasulo D."/>
            <person name="Halldorsson B.V."/>
            <person name="Hannenhalli S."/>
            <person name="Turner R."/>
            <person name="Yooseph S."/>
            <person name="Lu F."/>
            <person name="Nusskern D.R."/>
            <person name="Shue B.C."/>
            <person name="Zheng X.H."/>
            <person name="Zhong F."/>
            <person name="Delcher A.L."/>
            <person name="Huson D.H."/>
            <person name="Kravitz S.A."/>
            <person name="Mouchard L."/>
            <person name="Reinert K."/>
            <person name="Remington K.A."/>
            <person name="Clark A.G."/>
            <person name="Waterman M.S."/>
            <person name="Eichler E.E."/>
            <person name="Adams M.D."/>
            <person name="Hunkapiller M.W."/>
            <person name="Myers E.W."/>
            <person name="Venter J.C."/>
        </authorList>
    </citation>
    <scope>NUCLEOTIDE SEQUENCE [LARGE SCALE GENOMIC DNA]</scope>
</reference>
<reference key="3">
    <citation type="journal article" date="2004" name="Genome Res.">
        <title>The status, quality, and expansion of the NIH full-length cDNA project: the Mammalian Gene Collection (MGC).</title>
        <authorList>
            <consortium name="The MGC Project Team"/>
        </authorList>
    </citation>
    <scope>NUCLEOTIDE SEQUENCE [LARGE SCALE MRNA]</scope>
</reference>
<dbReference type="EMBL" id="AP002796">
    <property type="status" value="NOT_ANNOTATED_CDS"/>
    <property type="molecule type" value="Genomic_DNA"/>
</dbReference>
<dbReference type="EMBL" id="CH471076">
    <property type="protein sequence ID" value="EAW75073.1"/>
    <property type="molecule type" value="Genomic_DNA"/>
</dbReference>
<dbReference type="EMBL" id="BC150621">
    <property type="protein sequence ID" value="AAI50622.1"/>
    <property type="molecule type" value="mRNA"/>
</dbReference>
<dbReference type="CCDS" id="CCDS31648.1"/>
<dbReference type="RefSeq" id="NP_787081.2">
    <property type="nucleotide sequence ID" value="NM_175885.4"/>
</dbReference>
<dbReference type="PDB" id="6SEO">
    <property type="method" value="X-ray"/>
    <property type="resolution" value="2.55 A"/>
    <property type="chains" value="L=220-235"/>
</dbReference>
<dbReference type="PDBsum" id="6SEO"/>
<dbReference type="SMR" id="A6NEQ2"/>
<dbReference type="BioGRID" id="128642">
    <property type="interactions" value="1"/>
</dbReference>
<dbReference type="FunCoup" id="A6NEQ2">
    <property type="interactions" value="1"/>
</dbReference>
<dbReference type="STRING" id="9606.ENSP00000365295"/>
<dbReference type="GlyGen" id="A6NEQ2">
    <property type="glycosylation" value="1 site, 1 O-linked glycan (1 site)"/>
</dbReference>
<dbReference type="iPTMnet" id="A6NEQ2"/>
<dbReference type="PhosphoSitePlus" id="A6NEQ2"/>
<dbReference type="BioMuta" id="FAM181B"/>
<dbReference type="MassIVE" id="A6NEQ2"/>
<dbReference type="PaxDb" id="9606-ENSP00000365295"/>
<dbReference type="PeptideAtlas" id="A6NEQ2"/>
<dbReference type="Antibodypedia" id="57727">
    <property type="antibodies" value="30 antibodies from 10 providers"/>
</dbReference>
<dbReference type="DNASU" id="220382"/>
<dbReference type="Ensembl" id="ENST00000329203.5">
    <property type="protein sequence ID" value="ENSP00000365295.2"/>
    <property type="gene ID" value="ENSG00000182103.5"/>
</dbReference>
<dbReference type="GeneID" id="220382"/>
<dbReference type="KEGG" id="hsa:220382"/>
<dbReference type="MANE-Select" id="ENST00000329203.5">
    <property type="protein sequence ID" value="ENSP00000365295.2"/>
    <property type="RefSeq nucleotide sequence ID" value="NM_175885.4"/>
    <property type="RefSeq protein sequence ID" value="NP_787081.2"/>
</dbReference>
<dbReference type="UCSC" id="uc001ozp.4">
    <property type="organism name" value="human"/>
</dbReference>
<dbReference type="AGR" id="HGNC:28512"/>
<dbReference type="CTD" id="220382"/>
<dbReference type="GeneCards" id="FAM181B"/>
<dbReference type="HGNC" id="HGNC:28512">
    <property type="gene designation" value="FAM181B"/>
</dbReference>
<dbReference type="HPA" id="ENSG00000182103">
    <property type="expression patterns" value="Tissue enriched (brain)"/>
</dbReference>
<dbReference type="neXtProt" id="NX_A6NEQ2"/>
<dbReference type="OpenTargets" id="ENSG00000182103"/>
<dbReference type="PharmGKB" id="PA162387593"/>
<dbReference type="VEuPathDB" id="HostDB:ENSG00000182103"/>
<dbReference type="eggNOG" id="ENOG502QS8E">
    <property type="taxonomic scope" value="Eukaryota"/>
</dbReference>
<dbReference type="GeneTree" id="ENSGT00940000154730"/>
<dbReference type="HOGENOM" id="CLU_055561_0_0_1"/>
<dbReference type="InParanoid" id="A6NEQ2"/>
<dbReference type="OMA" id="PNFFTDC"/>
<dbReference type="OrthoDB" id="5981837at2759"/>
<dbReference type="PAN-GO" id="A6NEQ2">
    <property type="GO annotations" value="0 GO annotations based on evolutionary models"/>
</dbReference>
<dbReference type="PhylomeDB" id="A6NEQ2"/>
<dbReference type="TreeFam" id="TF333276"/>
<dbReference type="PathwayCommons" id="A6NEQ2"/>
<dbReference type="BioGRID-ORCS" id="220382">
    <property type="hits" value="10 hits in 1149 CRISPR screens"/>
</dbReference>
<dbReference type="GenomeRNAi" id="220382"/>
<dbReference type="Pharos" id="A6NEQ2">
    <property type="development level" value="Tdark"/>
</dbReference>
<dbReference type="PRO" id="PR:A6NEQ2"/>
<dbReference type="Proteomes" id="UP000005640">
    <property type="component" value="Chromosome 11"/>
</dbReference>
<dbReference type="RNAct" id="A6NEQ2">
    <property type="molecule type" value="protein"/>
</dbReference>
<dbReference type="Bgee" id="ENSG00000182103">
    <property type="expression patterns" value="Expressed in endothelial cell and 113 other cell types or tissues"/>
</dbReference>
<dbReference type="InterPro" id="IPR029359">
    <property type="entry name" value="FAM181"/>
</dbReference>
<dbReference type="InterPro" id="IPR053819">
    <property type="entry name" value="TEADIR3_omega_loop"/>
</dbReference>
<dbReference type="PANTHER" id="PTHR33766">
    <property type="entry name" value="PROTEIN FAM181B"/>
    <property type="match status" value="1"/>
</dbReference>
<dbReference type="PANTHER" id="PTHR33766:SF2">
    <property type="entry name" value="PROTEIN FAM181B"/>
    <property type="match status" value="1"/>
</dbReference>
<dbReference type="Pfam" id="PF15238">
    <property type="entry name" value="TEADIR3"/>
    <property type="match status" value="1"/>
</dbReference>
<sequence>MAVQAALLSTHPFVPFGFGGSPDGLGGAFGALDKGCCFEDDETGAPAGALLSGAEGGDVREATRDLLSFIDSASSNIKLALDKPGKSKRKVNHRKYLQKQIKRCSGLMGAAPPGPPSPSAADTPAKRPLAAPSAPTVAAPAHGKAAPRREASQAAAAASLQSRSLAALFDSLRHVPGGAEPAGGEVAAPAAGLGGAGTGGAGGDVAGPAGATAIPGARKVPLRARNLPPSFFTEPSRAGGGGCGPSGPDVSLGDLEKGAEAVEFFELLGPDYGAGTEAAVLLAAEPLDVFPAGASVLRGPPELEPGLFEPPPAVVGNLLYPEPWSVPGCSPTKKSPLTAPRGGLTLNEPLSPLYPAAADSPGGEDGRGHLASFAPFFPDCALPPPPPPHQVSYDYSAGYSRTAYSSLWRSDGVWEGAPGEEGAHRD</sequence>
<proteinExistence type="evidence at protein level"/>
<comment type="similarity">
    <text evidence="2">Belongs to the FAM181 family.</text>
</comment>
<protein>
    <recommendedName>
        <fullName>Protein FAM181B</fullName>
    </recommendedName>
</protein>
<feature type="chain" id="PRO_0000324302" description="Protein FAM181B">
    <location>
        <begin position="1"/>
        <end position="426"/>
    </location>
</feature>
<feature type="region of interest" description="Disordered" evidence="1">
    <location>
        <begin position="106"/>
        <end position="157"/>
    </location>
</feature>
<feature type="region of interest" description="Disordered" evidence="1">
    <location>
        <begin position="226"/>
        <end position="246"/>
    </location>
</feature>
<feature type="compositionally biased region" description="Low complexity" evidence="1">
    <location>
        <begin position="128"/>
        <end position="141"/>
    </location>
</feature>
<feature type="sequence variant" id="VAR_039694" description="In dbSNP:rs986097.">
    <original>V</original>
    <variation>L</variation>
    <location>
        <position position="186"/>
    </location>
</feature>
<feature type="sequence variant" id="VAR_039695" description="In dbSNP:rs6592081.">
    <original>R</original>
    <variation>P</variation>
    <location>
        <position position="367"/>
    </location>
</feature>
<feature type="sequence conflict" description="In Ref. 3; AAI50622." evidence="2" ref="3">
    <original>D</original>
    <variation>N</variation>
    <location>
        <position position="394"/>
    </location>
</feature>
<feature type="helix" evidence="3">
    <location>
        <begin position="222"/>
        <end position="224"/>
    </location>
</feature>
<feature type="helix" evidence="3">
    <location>
        <begin position="229"/>
        <end position="231"/>
    </location>
</feature>
<evidence type="ECO:0000256" key="1">
    <source>
        <dbReference type="SAM" id="MobiDB-lite"/>
    </source>
</evidence>
<evidence type="ECO:0000305" key="2"/>
<evidence type="ECO:0007829" key="3">
    <source>
        <dbReference type="PDB" id="6SEO"/>
    </source>
</evidence>